<evidence type="ECO:0000255" key="1">
    <source>
        <dbReference type="HAMAP-Rule" id="MF_00580"/>
    </source>
</evidence>
<evidence type="ECO:0000305" key="2"/>
<gene>
    <name evidence="1" type="primary">groES</name>
    <name evidence="1" type="synonym">groS</name>
    <name type="synonym">htpA</name>
</gene>
<protein>
    <recommendedName>
        <fullName evidence="1">Co-chaperonin GroES</fullName>
    </recommendedName>
    <alternativeName>
        <fullName evidence="1">10 kDa chaperonin</fullName>
    </alternativeName>
    <alternativeName>
        <fullName evidence="1">Chaperonin-10</fullName>
        <shortName evidence="1">Cpn10</shortName>
    </alternativeName>
</protein>
<keyword id="KW-0143">Chaperone</keyword>
<keyword id="KW-0963">Cytoplasm</keyword>
<keyword id="KW-0346">Stress response</keyword>
<reference key="1">
    <citation type="journal article" date="1991" name="FEMS Microbiol. Lett.">
        <title>Sequence analysis of the Legionella micdadei groELS operon.</title>
        <authorList>
            <person name="Hindersson P."/>
            <person name="Hoiby N."/>
            <person name="Bangsborg J."/>
        </authorList>
    </citation>
    <scope>NUCLEOTIDE SEQUENCE [GENOMIC DNA]</scope>
</reference>
<dbReference type="EMBL" id="X57520">
    <property type="status" value="NOT_ANNOTATED_CDS"/>
    <property type="molecule type" value="Genomic_DNA"/>
</dbReference>
<dbReference type="PIR" id="A54539">
    <property type="entry name" value="A54539"/>
</dbReference>
<dbReference type="SMR" id="P26195"/>
<dbReference type="STRING" id="451.B6N58_04215"/>
<dbReference type="GO" id="GO:0005737">
    <property type="term" value="C:cytoplasm"/>
    <property type="evidence" value="ECO:0007669"/>
    <property type="project" value="UniProtKB-SubCell"/>
</dbReference>
<dbReference type="GO" id="GO:0005524">
    <property type="term" value="F:ATP binding"/>
    <property type="evidence" value="ECO:0007669"/>
    <property type="project" value="InterPro"/>
</dbReference>
<dbReference type="GO" id="GO:0046872">
    <property type="term" value="F:metal ion binding"/>
    <property type="evidence" value="ECO:0007669"/>
    <property type="project" value="TreeGrafter"/>
</dbReference>
<dbReference type="GO" id="GO:0044183">
    <property type="term" value="F:protein folding chaperone"/>
    <property type="evidence" value="ECO:0007669"/>
    <property type="project" value="InterPro"/>
</dbReference>
<dbReference type="GO" id="GO:0051087">
    <property type="term" value="F:protein-folding chaperone binding"/>
    <property type="evidence" value="ECO:0007669"/>
    <property type="project" value="TreeGrafter"/>
</dbReference>
<dbReference type="GO" id="GO:0051082">
    <property type="term" value="F:unfolded protein binding"/>
    <property type="evidence" value="ECO:0007669"/>
    <property type="project" value="TreeGrafter"/>
</dbReference>
<dbReference type="GO" id="GO:0051085">
    <property type="term" value="P:chaperone cofactor-dependent protein refolding"/>
    <property type="evidence" value="ECO:0007669"/>
    <property type="project" value="TreeGrafter"/>
</dbReference>
<dbReference type="CDD" id="cd00320">
    <property type="entry name" value="cpn10"/>
    <property type="match status" value="1"/>
</dbReference>
<dbReference type="FunFam" id="2.30.33.40:FF:000001">
    <property type="entry name" value="10 kDa chaperonin"/>
    <property type="match status" value="1"/>
</dbReference>
<dbReference type="Gene3D" id="2.30.33.40">
    <property type="entry name" value="GroES chaperonin"/>
    <property type="match status" value="1"/>
</dbReference>
<dbReference type="HAMAP" id="MF_00580">
    <property type="entry name" value="CH10"/>
    <property type="match status" value="1"/>
</dbReference>
<dbReference type="InterPro" id="IPR020818">
    <property type="entry name" value="Chaperonin_GroES"/>
</dbReference>
<dbReference type="InterPro" id="IPR037124">
    <property type="entry name" value="Chaperonin_GroES_sf"/>
</dbReference>
<dbReference type="InterPro" id="IPR018369">
    <property type="entry name" value="Chaprnonin_Cpn10_CS"/>
</dbReference>
<dbReference type="InterPro" id="IPR011032">
    <property type="entry name" value="GroES-like_sf"/>
</dbReference>
<dbReference type="NCBIfam" id="NF001527">
    <property type="entry name" value="PRK00364.1-2"/>
    <property type="match status" value="1"/>
</dbReference>
<dbReference type="NCBIfam" id="NF001529">
    <property type="entry name" value="PRK00364.1-5"/>
    <property type="match status" value="1"/>
</dbReference>
<dbReference type="NCBIfam" id="NF001531">
    <property type="entry name" value="PRK00364.2-2"/>
    <property type="match status" value="1"/>
</dbReference>
<dbReference type="NCBIfam" id="NF001533">
    <property type="entry name" value="PRK00364.2-4"/>
    <property type="match status" value="1"/>
</dbReference>
<dbReference type="NCBIfam" id="NF001534">
    <property type="entry name" value="PRK00364.2-5"/>
    <property type="match status" value="1"/>
</dbReference>
<dbReference type="PANTHER" id="PTHR10772">
    <property type="entry name" value="10 KDA HEAT SHOCK PROTEIN"/>
    <property type="match status" value="1"/>
</dbReference>
<dbReference type="PANTHER" id="PTHR10772:SF58">
    <property type="entry name" value="CO-CHAPERONIN GROES"/>
    <property type="match status" value="1"/>
</dbReference>
<dbReference type="Pfam" id="PF00166">
    <property type="entry name" value="Cpn10"/>
    <property type="match status" value="1"/>
</dbReference>
<dbReference type="PRINTS" id="PR00297">
    <property type="entry name" value="CHAPERONIN10"/>
</dbReference>
<dbReference type="SMART" id="SM00883">
    <property type="entry name" value="Cpn10"/>
    <property type="match status" value="1"/>
</dbReference>
<dbReference type="SUPFAM" id="SSF50129">
    <property type="entry name" value="GroES-like"/>
    <property type="match status" value="1"/>
</dbReference>
<dbReference type="PROSITE" id="PS00681">
    <property type="entry name" value="CHAPERONINS_CPN10"/>
    <property type="match status" value="1"/>
</dbReference>
<accession>P26195</accession>
<feature type="chain" id="PRO_0000174775" description="Co-chaperonin GroES">
    <location>
        <begin position="1"/>
        <end position="96"/>
    </location>
</feature>
<comment type="function">
    <text evidence="1">Together with the chaperonin GroEL, plays an essential role in assisting protein folding. The GroEL-GroES system forms a nano-cage that allows encapsulation of the non-native substrate proteins and provides a physical environment optimized to promote and accelerate protein folding. GroES binds to the apical surface of the GroEL ring, thereby capping the opening of the GroEL channel.</text>
</comment>
<comment type="subunit">
    <text evidence="1">Heptamer of 7 subunits arranged in a ring. Interacts with the chaperonin GroEL.</text>
</comment>
<comment type="subcellular location">
    <subcellularLocation>
        <location evidence="1">Cytoplasm</location>
    </subcellularLocation>
</comment>
<comment type="similarity">
    <text evidence="1 2">Belongs to the GroES chaperonin family.</text>
</comment>
<sequence>MKIRPLHDRVVVRRMEEERTTAGGIVIPDSATEKPTRGEIIAVGPGKVLENGDVRALAVKVGDVVLFGKYSGTEVKISGQELVVMREDDIMGVIEK</sequence>
<organism>
    <name type="scientific">Legionella micdadei</name>
    <name type="common">Tatlockia micdadei</name>
    <dbReference type="NCBI Taxonomy" id="451"/>
    <lineage>
        <taxon>Bacteria</taxon>
        <taxon>Pseudomonadati</taxon>
        <taxon>Pseudomonadota</taxon>
        <taxon>Gammaproteobacteria</taxon>
        <taxon>Legionellales</taxon>
        <taxon>Legionellaceae</taxon>
        <taxon>Legionella</taxon>
    </lineage>
</organism>
<proteinExistence type="inferred from homology"/>
<name>CH10_LEGMI</name>